<protein>
    <recommendedName>
        <fullName evidence="1">Bifunctional protein Aas</fullName>
    </recommendedName>
    <domain>
        <recommendedName>
            <fullName evidence="1">2-acylglycerophosphoethanolamine acyltransferase</fullName>
            <ecNumber evidence="1">2.3.1.40</ecNumber>
        </recommendedName>
        <alternativeName>
            <fullName evidence="1">2-acyl-GPE acyltransferase</fullName>
        </alternativeName>
        <alternativeName>
            <fullName evidence="1">Acyl-[acyl-carrier-protein]--phospholipid O-acyltransferase</fullName>
        </alternativeName>
    </domain>
    <domain>
        <recommendedName>
            <fullName evidence="1">Acyl-[acyl-carrier-protein] synthetase</fullName>
            <ecNumber evidence="1">6.2.1.20</ecNumber>
        </recommendedName>
        <alternativeName>
            <fullName evidence="1">Acyl-ACP synthetase</fullName>
        </alternativeName>
        <alternativeName>
            <fullName evidence="1">Long-chain-fatty-acid--[acyl-carrier-protein] ligase</fullName>
        </alternativeName>
    </domain>
</protein>
<feature type="chain" id="PRO_1000065640" description="Bifunctional protein Aas">
    <location>
        <begin position="1"/>
        <end position="719"/>
    </location>
</feature>
<feature type="transmembrane region" description="Helical" evidence="1">
    <location>
        <begin position="258"/>
        <end position="277"/>
    </location>
</feature>
<feature type="transmembrane region" description="Helical" evidence="1">
    <location>
        <begin position="409"/>
        <end position="433"/>
    </location>
</feature>
<feature type="region of interest" description="Acyltransferase">
    <location>
        <begin position="15"/>
        <end position="138"/>
    </location>
</feature>
<feature type="region of interest" description="AMP-binding">
    <location>
        <begin position="233"/>
        <end position="646"/>
    </location>
</feature>
<feature type="active site" evidence="1">
    <location>
        <position position="36"/>
    </location>
</feature>
<dbReference type="EC" id="2.3.1.40" evidence="1"/>
<dbReference type="EC" id="6.2.1.20" evidence="1"/>
<dbReference type="EMBL" id="CP000783">
    <property type="protein sequence ID" value="ABU75767.1"/>
    <property type="molecule type" value="Genomic_DNA"/>
</dbReference>
<dbReference type="RefSeq" id="WP_012123884.1">
    <property type="nucleotide sequence ID" value="NC_009778.1"/>
</dbReference>
<dbReference type="SMR" id="A7MR36"/>
<dbReference type="KEGG" id="esa:ESA_00472"/>
<dbReference type="PATRIC" id="fig|290339.8.peg.428"/>
<dbReference type="HOGENOM" id="CLU_000022_59_8_6"/>
<dbReference type="Proteomes" id="UP000000260">
    <property type="component" value="Chromosome"/>
</dbReference>
<dbReference type="GO" id="GO:0005886">
    <property type="term" value="C:plasma membrane"/>
    <property type="evidence" value="ECO:0007669"/>
    <property type="project" value="UniProtKB-SubCell"/>
</dbReference>
<dbReference type="GO" id="GO:0008779">
    <property type="term" value="F:acyl-[acyl-carrier-protein]-phospholipid O-acyltransferase activity"/>
    <property type="evidence" value="ECO:0007669"/>
    <property type="project" value="UniProtKB-UniRule"/>
</dbReference>
<dbReference type="GO" id="GO:0005524">
    <property type="term" value="F:ATP binding"/>
    <property type="evidence" value="ECO:0007669"/>
    <property type="project" value="UniProtKB-KW"/>
</dbReference>
<dbReference type="GO" id="GO:0008922">
    <property type="term" value="F:long-chain fatty acid [acyl-carrier-protein] ligase activity"/>
    <property type="evidence" value="ECO:0007669"/>
    <property type="project" value="UniProtKB-UniRule"/>
</dbReference>
<dbReference type="GO" id="GO:0006631">
    <property type="term" value="P:fatty acid metabolic process"/>
    <property type="evidence" value="ECO:0007669"/>
    <property type="project" value="InterPro"/>
</dbReference>
<dbReference type="GO" id="GO:0008654">
    <property type="term" value="P:phospholipid biosynthetic process"/>
    <property type="evidence" value="ECO:0007669"/>
    <property type="project" value="InterPro"/>
</dbReference>
<dbReference type="CDD" id="cd07989">
    <property type="entry name" value="LPLAT_AGPAT-like"/>
    <property type="match status" value="1"/>
</dbReference>
<dbReference type="Gene3D" id="3.30.300.30">
    <property type="match status" value="1"/>
</dbReference>
<dbReference type="Gene3D" id="3.40.50.12780">
    <property type="entry name" value="N-terminal domain of ligase-like"/>
    <property type="match status" value="1"/>
</dbReference>
<dbReference type="HAMAP" id="MF_01162">
    <property type="entry name" value="Aas"/>
    <property type="match status" value="1"/>
</dbReference>
<dbReference type="InterPro" id="IPR023775">
    <property type="entry name" value="Aas"/>
</dbReference>
<dbReference type="InterPro" id="IPR045851">
    <property type="entry name" value="AMP-bd_C_sf"/>
</dbReference>
<dbReference type="InterPro" id="IPR020845">
    <property type="entry name" value="AMP-binding_CS"/>
</dbReference>
<dbReference type="InterPro" id="IPR000873">
    <property type="entry name" value="AMP-dep_synth/lig_dom"/>
</dbReference>
<dbReference type="InterPro" id="IPR042099">
    <property type="entry name" value="ANL_N_sf"/>
</dbReference>
<dbReference type="InterPro" id="IPR050237">
    <property type="entry name" value="ATP-dep_AMP-bd_enzyme"/>
</dbReference>
<dbReference type="InterPro" id="IPR002123">
    <property type="entry name" value="Plipid/glycerol_acylTrfase"/>
</dbReference>
<dbReference type="NCBIfam" id="NF005959">
    <property type="entry name" value="PRK08043.1"/>
    <property type="match status" value="1"/>
</dbReference>
<dbReference type="PANTHER" id="PTHR43767">
    <property type="entry name" value="LONG-CHAIN-FATTY-ACID--COA LIGASE"/>
    <property type="match status" value="1"/>
</dbReference>
<dbReference type="PANTHER" id="PTHR43767:SF1">
    <property type="entry name" value="NONRIBOSOMAL PEPTIDE SYNTHASE PES1 (EUROFUNG)-RELATED"/>
    <property type="match status" value="1"/>
</dbReference>
<dbReference type="Pfam" id="PF01553">
    <property type="entry name" value="Acyltransferase"/>
    <property type="match status" value="1"/>
</dbReference>
<dbReference type="Pfam" id="PF00501">
    <property type="entry name" value="AMP-binding"/>
    <property type="match status" value="1"/>
</dbReference>
<dbReference type="SMART" id="SM00563">
    <property type="entry name" value="PlsC"/>
    <property type="match status" value="1"/>
</dbReference>
<dbReference type="SUPFAM" id="SSF56801">
    <property type="entry name" value="Acetyl-CoA synthetase-like"/>
    <property type="match status" value="1"/>
</dbReference>
<dbReference type="SUPFAM" id="SSF69593">
    <property type="entry name" value="Glycerol-3-phosphate (1)-acyltransferase"/>
    <property type="match status" value="1"/>
</dbReference>
<dbReference type="PROSITE" id="PS00455">
    <property type="entry name" value="AMP_BINDING"/>
    <property type="match status" value="1"/>
</dbReference>
<accession>A7MR36</accession>
<comment type="function">
    <text evidence="1">Plays a role in lysophospholipid acylation. Transfers fatty acids to the 1-position via an enzyme-bound acyl-ACP intermediate in the presence of ATP and magnesium. Its physiological function is to regenerate phosphatidylethanolamine from 2-acyl-glycero-3-phosphoethanolamine (2-acyl-GPE) formed by transacylation reactions or degradation by phospholipase A1.</text>
</comment>
<comment type="catalytic activity">
    <reaction evidence="1">
        <text>a 2-acyl-sn-glycero-3-phosphoethanolamine + a fatty acyl-[ACP] = a 1,2-diacyl-sn-glycero-3-phosphoethanolamine + holo-[ACP]</text>
        <dbReference type="Rhea" id="RHEA:10304"/>
        <dbReference type="Rhea" id="RHEA-COMP:9685"/>
        <dbReference type="Rhea" id="RHEA-COMP:14125"/>
        <dbReference type="ChEBI" id="CHEBI:64479"/>
        <dbReference type="ChEBI" id="CHEBI:64612"/>
        <dbReference type="ChEBI" id="CHEBI:65213"/>
        <dbReference type="ChEBI" id="CHEBI:138651"/>
        <dbReference type="EC" id="2.3.1.40"/>
    </reaction>
</comment>
<comment type="catalytic activity">
    <reaction evidence="1">
        <text>a long-chain fatty acid + holo-[ACP] + ATP = a long-chain fatty acyl-[ACP] + AMP + diphosphate</text>
        <dbReference type="Rhea" id="RHEA:45588"/>
        <dbReference type="Rhea" id="RHEA-COMP:9685"/>
        <dbReference type="Rhea" id="RHEA-COMP:12682"/>
        <dbReference type="ChEBI" id="CHEBI:30616"/>
        <dbReference type="ChEBI" id="CHEBI:33019"/>
        <dbReference type="ChEBI" id="CHEBI:57560"/>
        <dbReference type="ChEBI" id="CHEBI:64479"/>
        <dbReference type="ChEBI" id="CHEBI:133243"/>
        <dbReference type="ChEBI" id="CHEBI:456215"/>
        <dbReference type="EC" id="6.2.1.20"/>
    </reaction>
</comment>
<comment type="subcellular location">
    <subcellularLocation>
        <location evidence="1">Cell inner membrane</location>
        <topology evidence="1">Multi-pass membrane protein</topology>
    </subcellularLocation>
</comment>
<comment type="similarity">
    <text evidence="1">In the N-terminal section; belongs to the 2-acyl-GPE acetyltransferase family.</text>
</comment>
<comment type="similarity">
    <text evidence="1">In the C-terminal section; belongs to the ATP-dependent AMP-binding enzyme family.</text>
</comment>
<proteinExistence type="inferred from homology"/>
<evidence type="ECO:0000255" key="1">
    <source>
        <dbReference type="HAMAP-Rule" id="MF_01162"/>
    </source>
</evidence>
<sequence length="719" mass="79978">MVLKFFRWLFRLLFRIQVYGDTGPLTQQRVLITPNHVSFLDGALMALFLPVRPVFAVYTSISQQWYMRALKPLIDFVPLDPTKPMSVKQLVRLVGEGRPVVIFPEGRISISGSLMKIYEGAGFVAAKSQATVIPVRIEGAELTFFSRLKGLVKRRLFPRISIHILPPTSIPMPDAPKARDRRKMAGEMLHQVMMEARMAARPRETLFEALINAQKRYGESKSCLEDINFKPDTYRSLMMKTLFVGRILDKYSAPREAIGLMLPNASISAAVIFGAVMRGRIPAMMNYTAGVQGLTSAITAAQIKTIFTSRQFLDKGKLWHLSEQITSVRWVFLEDLKGEVTAKDKAWIFAHLLMPRLAQVEQQPEDAALILFTSGSEGNPKGVVHSHKSLLANVEQIRTIADFTADDKFMSALPLFHSFGLTVGLFTPLLTGAEVFLYPSPLHYRVVPELVYDRNCTVIFGTSTFLGHYARFAHPYDFHLVRYVVAGAEKLQESTKQIWQDKFGLRILEGYGVTECAPVVSINVPMAAKPGTVGRILPAMDARLVEVPGIEQGGRLQLKGPNIMKGYLRVENPGVLEAPAAENPQGVSEPGWYDTGDIVAFDEQGFVQIQGRAKRFAKIAGEMVSLEMVESLALAVSPEKMHATAIKHDAAKGEALVLFTTDPELTREKLAQQARSKGVPELAVPRDIRFLKQLPLLGSGKPDFVSLKKLVDQEETHHA</sequence>
<reference key="1">
    <citation type="journal article" date="2010" name="PLoS ONE">
        <title>Genome sequence of Cronobacter sakazakii BAA-894 and comparative genomic hybridization analysis with other Cronobacter species.</title>
        <authorList>
            <person name="Kucerova E."/>
            <person name="Clifton S.W."/>
            <person name="Xia X.Q."/>
            <person name="Long F."/>
            <person name="Porwollik S."/>
            <person name="Fulton L."/>
            <person name="Fronick C."/>
            <person name="Minx P."/>
            <person name="Kyung K."/>
            <person name="Warren W."/>
            <person name="Fulton R."/>
            <person name="Feng D."/>
            <person name="Wollam A."/>
            <person name="Shah N."/>
            <person name="Bhonagiri V."/>
            <person name="Nash W.E."/>
            <person name="Hallsworth-Pepin K."/>
            <person name="Wilson R.K."/>
            <person name="McClelland M."/>
            <person name="Forsythe S.J."/>
        </authorList>
    </citation>
    <scope>NUCLEOTIDE SEQUENCE [LARGE SCALE GENOMIC DNA]</scope>
    <source>
        <strain>ATCC BAA-894</strain>
    </source>
</reference>
<name>AAS_CROS8</name>
<gene>
    <name evidence="1" type="primary">aas</name>
    <name type="ordered locus">ESA_00472</name>
</gene>
<organism>
    <name type="scientific">Cronobacter sakazakii (strain ATCC BAA-894)</name>
    <name type="common">Enterobacter sakazakii</name>
    <dbReference type="NCBI Taxonomy" id="290339"/>
    <lineage>
        <taxon>Bacteria</taxon>
        <taxon>Pseudomonadati</taxon>
        <taxon>Pseudomonadota</taxon>
        <taxon>Gammaproteobacteria</taxon>
        <taxon>Enterobacterales</taxon>
        <taxon>Enterobacteriaceae</taxon>
        <taxon>Cronobacter</taxon>
    </lineage>
</organism>
<keyword id="KW-0012">Acyltransferase</keyword>
<keyword id="KW-0067">ATP-binding</keyword>
<keyword id="KW-0997">Cell inner membrane</keyword>
<keyword id="KW-1003">Cell membrane</keyword>
<keyword id="KW-0436">Ligase</keyword>
<keyword id="KW-0472">Membrane</keyword>
<keyword id="KW-0511">Multifunctional enzyme</keyword>
<keyword id="KW-0547">Nucleotide-binding</keyword>
<keyword id="KW-1185">Reference proteome</keyword>
<keyword id="KW-0808">Transferase</keyword>
<keyword id="KW-0812">Transmembrane</keyword>
<keyword id="KW-1133">Transmembrane helix</keyword>